<evidence type="ECO:0000255" key="1">
    <source>
        <dbReference type="HAMAP-Rule" id="MF_01379"/>
    </source>
</evidence>
<comment type="function">
    <text evidence="1">Photosystem II (PSII) is a light-driven water:plastoquinone oxidoreductase that uses light energy to abstract electrons from H(2)O, generating O(2) and a proton gradient subsequently used for ATP formation. It consists of a core antenna complex that captures photons, and an electron transfer chain that converts photonic excitation into a charge separation. The D1/D2 (PsbA/PsbD) reaction center heterodimer binds P680, the primary electron donor of PSII as well as several subsequent electron acceptors.</text>
</comment>
<comment type="catalytic activity">
    <reaction evidence="1">
        <text>2 a plastoquinone + 4 hnu + 2 H2O = 2 a plastoquinol + O2</text>
        <dbReference type="Rhea" id="RHEA:36359"/>
        <dbReference type="Rhea" id="RHEA-COMP:9561"/>
        <dbReference type="Rhea" id="RHEA-COMP:9562"/>
        <dbReference type="ChEBI" id="CHEBI:15377"/>
        <dbReference type="ChEBI" id="CHEBI:15379"/>
        <dbReference type="ChEBI" id="CHEBI:17757"/>
        <dbReference type="ChEBI" id="CHEBI:30212"/>
        <dbReference type="ChEBI" id="CHEBI:62192"/>
        <dbReference type="EC" id="1.10.3.9"/>
    </reaction>
</comment>
<comment type="cofactor">
    <text evidence="1">The D1/D2 heterodimer binds P680, chlorophylls that are the primary electron donor of PSII, and subsequent electron acceptors. It shares a non-heme iron and each subunit binds pheophytin, quinone, additional chlorophylls, carotenoids and lipids. D1 provides most of the ligands for the Mn4-Ca-O5 cluster of the oxygen-evolving complex (OEC). There is also a Cl(-1) ion associated with D1 and D2, which is required for oxygen evolution. The PSII complex binds additional chlorophylls, carotenoids and specific lipids.</text>
</comment>
<comment type="subunit">
    <text evidence="1">PSII is composed of 1 copy each of membrane proteins PsbA, PsbB, PsbC, PsbD, PsbE, PsbF, PsbH, PsbI, PsbJ, PsbK, PsbL, PsbM, PsbT, PsbX, PsbY, PsbZ, Psb30/Ycf12, at least 3 peripheral proteins of the oxygen-evolving complex and a large number of cofactors. It forms dimeric complexes.</text>
</comment>
<comment type="subcellular location">
    <subcellularLocation>
        <location evidence="1">Plastid</location>
        <location evidence="1">Chloroplast thylakoid membrane</location>
        <topology evidence="1">Multi-pass membrane protein</topology>
    </subcellularLocation>
</comment>
<comment type="PTM">
    <text evidence="1">Tyr-161 forms a radical intermediate that is referred to as redox-active TyrZ, YZ or Y-Z.</text>
</comment>
<comment type="PTM">
    <text evidence="1">C-terminally processed by CTPA; processing is essential to allow assembly of the oxygen-evolving complex and thus photosynthetic growth.</text>
</comment>
<comment type="miscellaneous">
    <text evidence="1">2 of the reaction center chlorophylls (ChlD1 and ChlD2) are entirely coordinated by water.</text>
</comment>
<comment type="miscellaneous">
    <text evidence="1">Herbicides such as atrazine, BNT, diuron or ioxynil bind in the Q(B) binding site and block subsequent electron transfer.</text>
</comment>
<comment type="similarity">
    <text evidence="1">Belongs to the reaction center PufL/M/PsbA/D family.</text>
</comment>
<reference key="1">
    <citation type="journal article" date="2004" name="DNA Res.">
        <title>Complete nucleotide sequence of the sugarcane (Saccharum officinarum) chloroplast genome: a comparative analysis of four monocot chloroplast genomes.</title>
        <authorList>
            <person name="Asano T."/>
            <person name="Tsudzuki T."/>
            <person name="Takahashi S."/>
            <person name="Shimada H."/>
            <person name="Kadowaki K."/>
        </authorList>
    </citation>
    <scope>NUCLEOTIDE SEQUENCE [LARGE SCALE GENOMIC DNA]</scope>
</reference>
<dbReference type="EC" id="1.10.3.9" evidence="1"/>
<dbReference type="EMBL" id="AP006714">
    <property type="status" value="NOT_ANNOTATED_CDS"/>
    <property type="molecule type" value="Genomic_DNA"/>
</dbReference>
<dbReference type="RefSeq" id="YP_009389550.1">
    <property type="nucleotide sequence ID" value="NC_035224.1"/>
</dbReference>
<dbReference type="SMR" id="P0C157"/>
<dbReference type="GeneID" id="33347760"/>
<dbReference type="GO" id="GO:0009535">
    <property type="term" value="C:chloroplast thylakoid membrane"/>
    <property type="evidence" value="ECO:0007669"/>
    <property type="project" value="UniProtKB-SubCell"/>
</dbReference>
<dbReference type="GO" id="GO:0009523">
    <property type="term" value="C:photosystem II"/>
    <property type="evidence" value="ECO:0007669"/>
    <property type="project" value="UniProtKB-KW"/>
</dbReference>
<dbReference type="GO" id="GO:0016168">
    <property type="term" value="F:chlorophyll binding"/>
    <property type="evidence" value="ECO:0007669"/>
    <property type="project" value="UniProtKB-UniRule"/>
</dbReference>
<dbReference type="GO" id="GO:0045156">
    <property type="term" value="F:electron transporter, transferring electrons within the cyclic electron transport pathway of photosynthesis activity"/>
    <property type="evidence" value="ECO:0007669"/>
    <property type="project" value="InterPro"/>
</dbReference>
<dbReference type="GO" id="GO:0005506">
    <property type="term" value="F:iron ion binding"/>
    <property type="evidence" value="ECO:0007669"/>
    <property type="project" value="UniProtKB-UniRule"/>
</dbReference>
<dbReference type="GO" id="GO:0016682">
    <property type="term" value="F:oxidoreductase activity, acting on diphenols and related substances as donors, oxygen as acceptor"/>
    <property type="evidence" value="ECO:0007669"/>
    <property type="project" value="UniProtKB-UniRule"/>
</dbReference>
<dbReference type="GO" id="GO:0010242">
    <property type="term" value="F:oxygen evolving activity"/>
    <property type="evidence" value="ECO:0007669"/>
    <property type="project" value="UniProtKB-EC"/>
</dbReference>
<dbReference type="GO" id="GO:0009772">
    <property type="term" value="P:photosynthetic electron transport in photosystem II"/>
    <property type="evidence" value="ECO:0007669"/>
    <property type="project" value="InterPro"/>
</dbReference>
<dbReference type="GO" id="GO:0009635">
    <property type="term" value="P:response to herbicide"/>
    <property type="evidence" value="ECO:0007669"/>
    <property type="project" value="UniProtKB-KW"/>
</dbReference>
<dbReference type="CDD" id="cd09289">
    <property type="entry name" value="Photosystem-II_D1"/>
    <property type="match status" value="1"/>
</dbReference>
<dbReference type="FunFam" id="1.20.85.10:FF:000002">
    <property type="entry name" value="Photosystem II protein D1"/>
    <property type="match status" value="1"/>
</dbReference>
<dbReference type="Gene3D" id="1.20.85.10">
    <property type="entry name" value="Photosystem II protein D1-like"/>
    <property type="match status" value="1"/>
</dbReference>
<dbReference type="HAMAP" id="MF_01379">
    <property type="entry name" value="PSII_PsbA_D1"/>
    <property type="match status" value="1"/>
</dbReference>
<dbReference type="InterPro" id="IPR055266">
    <property type="entry name" value="D1/D2"/>
</dbReference>
<dbReference type="InterPro" id="IPR036854">
    <property type="entry name" value="Photo_II_D1/D2_sf"/>
</dbReference>
<dbReference type="InterPro" id="IPR000484">
    <property type="entry name" value="Photo_RC_L/M"/>
</dbReference>
<dbReference type="InterPro" id="IPR055265">
    <property type="entry name" value="Photo_RC_L/M_CS"/>
</dbReference>
<dbReference type="InterPro" id="IPR005867">
    <property type="entry name" value="PSII_D1"/>
</dbReference>
<dbReference type="NCBIfam" id="TIGR01151">
    <property type="entry name" value="psbA"/>
    <property type="match status" value="1"/>
</dbReference>
<dbReference type="PANTHER" id="PTHR33149">
    <property type="entry name" value="PHOTOSYSTEM II PROTEIN D1"/>
    <property type="match status" value="1"/>
</dbReference>
<dbReference type="PANTHER" id="PTHR33149:SF58">
    <property type="entry name" value="PHOTOSYSTEM II PROTEIN D1"/>
    <property type="match status" value="1"/>
</dbReference>
<dbReference type="Pfam" id="PF00124">
    <property type="entry name" value="Photo_RC"/>
    <property type="match status" value="1"/>
</dbReference>
<dbReference type="PRINTS" id="PR00256">
    <property type="entry name" value="REACTNCENTRE"/>
</dbReference>
<dbReference type="SUPFAM" id="SSF81483">
    <property type="entry name" value="Bacterial photosystem II reaction centre, L and M subunits"/>
    <property type="match status" value="1"/>
</dbReference>
<dbReference type="PROSITE" id="PS00244">
    <property type="entry name" value="REACTION_CENTER"/>
    <property type="match status" value="1"/>
</dbReference>
<sequence>MTAILERRESTSLWGRFCNWITSTENRLYIGWFGVLMIPTLLTATSVFIIAFIAAPPVDIDGIREPVSGSLLYGNNIISGAIIPTSAAIGLHFYPIWEAASVDEWLYNGGPYELIVLHFLLGVACYMGREWELSFRLGMRPWIAVAYSAPVAAATAVFLIYPIGQGSFSDGMPLGISGTFNFMIVFQAEHNILMHPFHMLGVAGVFGGSLFSAMHGSLVTSSLIRETTENESANEGYKFGQEEETYNIVAAHGYFGRLIFQYASFNNSRSLHFFLAAWPVVGIWFTALGISTMAFNLNGFNFNQSVVDSQGRVINTWADIINRANLGMEVMHERNAHNFPLDLAALEVPSLNG</sequence>
<accession>P0C157</accession>
<geneLocation type="chloroplast"/>
<feature type="initiator methionine" description="Removed" evidence="1">
    <location>
        <position position="1"/>
    </location>
</feature>
<feature type="chain" id="PRO_0000226921" description="Photosystem II protein D1" evidence="1">
    <location>
        <begin position="2"/>
        <end position="344"/>
    </location>
</feature>
<feature type="propeptide" id="PRO_0000316480" evidence="1">
    <location>
        <begin position="345"/>
        <end position="353"/>
    </location>
</feature>
<feature type="transmembrane region" description="Helical" evidence="1">
    <location>
        <begin position="29"/>
        <end position="46"/>
    </location>
</feature>
<feature type="transmembrane region" description="Helical" evidence="1">
    <location>
        <begin position="118"/>
        <end position="133"/>
    </location>
</feature>
<feature type="transmembrane region" description="Helical" evidence="1">
    <location>
        <begin position="142"/>
        <end position="156"/>
    </location>
</feature>
<feature type="transmembrane region" description="Helical" evidence="1">
    <location>
        <begin position="197"/>
        <end position="218"/>
    </location>
</feature>
<feature type="transmembrane region" description="Helical" evidence="1">
    <location>
        <begin position="274"/>
        <end position="288"/>
    </location>
</feature>
<feature type="binding site" description="axial binding residue" evidence="1">
    <location>
        <position position="118"/>
    </location>
    <ligand>
        <name>chlorophyll a</name>
        <dbReference type="ChEBI" id="CHEBI:58416"/>
        <label>ChlzD1</label>
    </ligand>
    <ligandPart>
        <name>Mg</name>
        <dbReference type="ChEBI" id="CHEBI:25107"/>
    </ligandPart>
</feature>
<feature type="binding site" evidence="1">
    <location>
        <position position="126"/>
    </location>
    <ligand>
        <name>pheophytin a</name>
        <dbReference type="ChEBI" id="CHEBI:136840"/>
        <label>D1</label>
    </ligand>
</feature>
<feature type="binding site" evidence="1">
    <location>
        <position position="170"/>
    </location>
    <ligand>
        <name>[CaMn4O5] cluster</name>
        <dbReference type="ChEBI" id="CHEBI:189552"/>
    </ligand>
</feature>
<feature type="binding site" evidence="1">
    <location>
        <position position="189"/>
    </location>
    <ligand>
        <name>[CaMn4O5] cluster</name>
        <dbReference type="ChEBI" id="CHEBI:189552"/>
    </ligand>
</feature>
<feature type="binding site" description="axial binding residue" evidence="1">
    <location>
        <position position="198"/>
    </location>
    <ligand>
        <name>chlorophyll a</name>
        <dbReference type="ChEBI" id="CHEBI:58416"/>
        <label>PD1</label>
    </ligand>
    <ligandPart>
        <name>Mg</name>
        <dbReference type="ChEBI" id="CHEBI:25107"/>
    </ligandPart>
</feature>
<feature type="binding site" evidence="1">
    <location>
        <position position="215"/>
    </location>
    <ligand>
        <name>a quinone</name>
        <dbReference type="ChEBI" id="CHEBI:132124"/>
        <label>B</label>
    </ligand>
</feature>
<feature type="binding site" evidence="1">
    <location>
        <position position="215"/>
    </location>
    <ligand>
        <name>Fe cation</name>
        <dbReference type="ChEBI" id="CHEBI:24875"/>
        <note>ligand shared with heterodimeric partner</note>
    </ligand>
</feature>
<feature type="binding site" evidence="1">
    <location>
        <begin position="264"/>
        <end position="265"/>
    </location>
    <ligand>
        <name>a quinone</name>
        <dbReference type="ChEBI" id="CHEBI:132124"/>
        <label>B</label>
    </ligand>
</feature>
<feature type="binding site" evidence="1">
    <location>
        <position position="272"/>
    </location>
    <ligand>
        <name>Fe cation</name>
        <dbReference type="ChEBI" id="CHEBI:24875"/>
        <note>ligand shared with heterodimeric partner</note>
    </ligand>
</feature>
<feature type="binding site" evidence="1">
    <location>
        <position position="332"/>
    </location>
    <ligand>
        <name>[CaMn4O5] cluster</name>
        <dbReference type="ChEBI" id="CHEBI:189552"/>
    </ligand>
</feature>
<feature type="binding site" evidence="1">
    <location>
        <position position="333"/>
    </location>
    <ligand>
        <name>[CaMn4O5] cluster</name>
        <dbReference type="ChEBI" id="CHEBI:189552"/>
    </ligand>
</feature>
<feature type="binding site" evidence="1">
    <location>
        <position position="342"/>
    </location>
    <ligand>
        <name>[CaMn4O5] cluster</name>
        <dbReference type="ChEBI" id="CHEBI:189552"/>
    </ligand>
</feature>
<feature type="binding site" evidence="1">
    <location>
        <position position="344"/>
    </location>
    <ligand>
        <name>[CaMn4O5] cluster</name>
        <dbReference type="ChEBI" id="CHEBI:189552"/>
    </ligand>
</feature>
<feature type="site" description="Tyrosine radical intermediate" evidence="1">
    <location>
        <position position="161"/>
    </location>
</feature>
<feature type="site" description="Stabilizes free radical intermediate" evidence="1">
    <location>
        <position position="190"/>
    </location>
</feature>
<feature type="site" description="Cleavage; by CTPA" evidence="1">
    <location>
        <begin position="344"/>
        <end position="345"/>
    </location>
</feature>
<feature type="modified residue" description="N-acetylthreonine" evidence="1">
    <location>
        <position position="2"/>
    </location>
</feature>
<feature type="modified residue" description="Phosphothreonine" evidence="1">
    <location>
        <position position="2"/>
    </location>
</feature>
<keyword id="KW-0007">Acetylation</keyword>
<keyword id="KW-0106">Calcium</keyword>
<keyword id="KW-0148">Chlorophyll</keyword>
<keyword id="KW-0150">Chloroplast</keyword>
<keyword id="KW-0157">Chromophore</keyword>
<keyword id="KW-0249">Electron transport</keyword>
<keyword id="KW-0359">Herbicide resistance</keyword>
<keyword id="KW-0408">Iron</keyword>
<keyword id="KW-0460">Magnesium</keyword>
<keyword id="KW-0464">Manganese</keyword>
<keyword id="KW-0472">Membrane</keyword>
<keyword id="KW-0479">Metal-binding</keyword>
<keyword id="KW-0560">Oxidoreductase</keyword>
<keyword id="KW-0597">Phosphoprotein</keyword>
<keyword id="KW-0602">Photosynthesis</keyword>
<keyword id="KW-0604">Photosystem II</keyword>
<keyword id="KW-0934">Plastid</keyword>
<keyword id="KW-0793">Thylakoid</keyword>
<keyword id="KW-0812">Transmembrane</keyword>
<keyword id="KW-1133">Transmembrane helix</keyword>
<keyword id="KW-0813">Transport</keyword>
<proteinExistence type="inferred from homology"/>
<name>PSBA_SACOF</name>
<gene>
    <name evidence="1" type="primary">psbA</name>
</gene>
<protein>
    <recommendedName>
        <fullName evidence="1">Photosystem II protein D1</fullName>
        <shortName evidence="1">PSII D1 protein</shortName>
        <ecNumber evidence="1">1.10.3.9</ecNumber>
    </recommendedName>
    <alternativeName>
        <fullName evidence="1">Photosystem II Q(B) protein</fullName>
    </alternativeName>
</protein>
<organism>
    <name type="scientific">Saccharum officinarum</name>
    <name type="common">Sugarcane</name>
    <dbReference type="NCBI Taxonomy" id="4547"/>
    <lineage>
        <taxon>Eukaryota</taxon>
        <taxon>Viridiplantae</taxon>
        <taxon>Streptophyta</taxon>
        <taxon>Embryophyta</taxon>
        <taxon>Tracheophyta</taxon>
        <taxon>Spermatophyta</taxon>
        <taxon>Magnoliopsida</taxon>
        <taxon>Liliopsida</taxon>
        <taxon>Poales</taxon>
        <taxon>Poaceae</taxon>
        <taxon>PACMAD clade</taxon>
        <taxon>Panicoideae</taxon>
        <taxon>Andropogonodae</taxon>
        <taxon>Andropogoneae</taxon>
        <taxon>Saccharinae</taxon>
        <taxon>Saccharum</taxon>
        <taxon>Saccharum officinarum species complex</taxon>
    </lineage>
</organism>